<accession>B0VU22</accession>
<gene>
    <name evidence="1" type="primary">dcd</name>
    <name type="ordered locus">ABSDF2679</name>
</gene>
<keyword id="KW-0378">Hydrolase</keyword>
<keyword id="KW-0546">Nucleotide metabolism</keyword>
<keyword id="KW-0547">Nucleotide-binding</keyword>
<name>DCD_ACIBS</name>
<reference key="1">
    <citation type="journal article" date="2008" name="PLoS ONE">
        <title>Comparative analysis of Acinetobacters: three genomes for three lifestyles.</title>
        <authorList>
            <person name="Vallenet D."/>
            <person name="Nordmann P."/>
            <person name="Barbe V."/>
            <person name="Poirel L."/>
            <person name="Mangenot S."/>
            <person name="Bataille E."/>
            <person name="Dossat C."/>
            <person name="Gas S."/>
            <person name="Kreimeyer A."/>
            <person name="Lenoble P."/>
            <person name="Oztas S."/>
            <person name="Poulain J."/>
            <person name="Segurens B."/>
            <person name="Robert C."/>
            <person name="Abergel C."/>
            <person name="Claverie J.-M."/>
            <person name="Raoult D."/>
            <person name="Medigue C."/>
            <person name="Weissenbach J."/>
            <person name="Cruveiller S."/>
        </authorList>
    </citation>
    <scope>NUCLEOTIDE SEQUENCE [LARGE SCALE GENOMIC DNA]</scope>
    <source>
        <strain>SDF</strain>
    </source>
</reference>
<comment type="function">
    <text evidence="1">Catalyzes the deamination of dCTP to dUTP.</text>
</comment>
<comment type="catalytic activity">
    <reaction evidence="1">
        <text>dCTP + H2O + H(+) = dUTP + NH4(+)</text>
        <dbReference type="Rhea" id="RHEA:22680"/>
        <dbReference type="ChEBI" id="CHEBI:15377"/>
        <dbReference type="ChEBI" id="CHEBI:15378"/>
        <dbReference type="ChEBI" id="CHEBI:28938"/>
        <dbReference type="ChEBI" id="CHEBI:61481"/>
        <dbReference type="ChEBI" id="CHEBI:61555"/>
        <dbReference type="EC" id="3.5.4.13"/>
    </reaction>
</comment>
<comment type="pathway">
    <text evidence="1">Pyrimidine metabolism; dUMP biosynthesis; dUMP from dCTP (dUTP route): step 1/2.</text>
</comment>
<comment type="subunit">
    <text evidence="1">Homotrimer.</text>
</comment>
<comment type="similarity">
    <text evidence="1">Belongs to the dCTP deaminase family.</text>
</comment>
<feature type="chain" id="PRO_1000096399" description="dCTP deaminase">
    <location>
        <begin position="1"/>
        <end position="189"/>
    </location>
</feature>
<feature type="active site" description="Proton donor/acceptor" evidence="1">
    <location>
        <position position="138"/>
    </location>
</feature>
<feature type="binding site" evidence="1">
    <location>
        <begin position="112"/>
        <end position="117"/>
    </location>
    <ligand>
        <name>dCTP</name>
        <dbReference type="ChEBI" id="CHEBI:61481"/>
    </ligand>
</feature>
<feature type="binding site" evidence="1">
    <location>
        <begin position="136"/>
        <end position="138"/>
    </location>
    <ligand>
        <name>dCTP</name>
        <dbReference type="ChEBI" id="CHEBI:61481"/>
    </ligand>
</feature>
<feature type="binding site" evidence="1">
    <location>
        <position position="157"/>
    </location>
    <ligand>
        <name>dCTP</name>
        <dbReference type="ChEBI" id="CHEBI:61481"/>
    </ligand>
</feature>
<feature type="binding site" evidence="1">
    <location>
        <position position="171"/>
    </location>
    <ligand>
        <name>dCTP</name>
        <dbReference type="ChEBI" id="CHEBI:61481"/>
    </ligand>
</feature>
<feature type="binding site" evidence="1">
    <location>
        <position position="181"/>
    </location>
    <ligand>
        <name>dCTP</name>
        <dbReference type="ChEBI" id="CHEBI:61481"/>
    </ligand>
</feature>
<dbReference type="EC" id="3.5.4.13" evidence="1"/>
<dbReference type="EMBL" id="CU468230">
    <property type="protein sequence ID" value="CAP01985.1"/>
    <property type="molecule type" value="Genomic_DNA"/>
</dbReference>
<dbReference type="SMR" id="B0VU22"/>
<dbReference type="KEGG" id="abm:ABSDF2679"/>
<dbReference type="HOGENOM" id="CLU_087476_4_0_6"/>
<dbReference type="UniPathway" id="UPA00610">
    <property type="reaction ID" value="UER00665"/>
</dbReference>
<dbReference type="Proteomes" id="UP000001741">
    <property type="component" value="Chromosome"/>
</dbReference>
<dbReference type="GO" id="GO:0008829">
    <property type="term" value="F:dCTP deaminase activity"/>
    <property type="evidence" value="ECO:0007669"/>
    <property type="project" value="UniProtKB-UniRule"/>
</dbReference>
<dbReference type="GO" id="GO:0000166">
    <property type="term" value="F:nucleotide binding"/>
    <property type="evidence" value="ECO:0007669"/>
    <property type="project" value="UniProtKB-KW"/>
</dbReference>
<dbReference type="GO" id="GO:0006226">
    <property type="term" value="P:dUMP biosynthetic process"/>
    <property type="evidence" value="ECO:0007669"/>
    <property type="project" value="UniProtKB-UniPathway"/>
</dbReference>
<dbReference type="GO" id="GO:0006229">
    <property type="term" value="P:dUTP biosynthetic process"/>
    <property type="evidence" value="ECO:0007669"/>
    <property type="project" value="UniProtKB-UniRule"/>
</dbReference>
<dbReference type="GO" id="GO:0015949">
    <property type="term" value="P:nucleobase-containing small molecule interconversion"/>
    <property type="evidence" value="ECO:0007669"/>
    <property type="project" value="TreeGrafter"/>
</dbReference>
<dbReference type="CDD" id="cd07557">
    <property type="entry name" value="trimeric_dUTPase"/>
    <property type="match status" value="1"/>
</dbReference>
<dbReference type="FunFam" id="2.70.40.10:FF:000001">
    <property type="entry name" value="dCTP deaminase"/>
    <property type="match status" value="1"/>
</dbReference>
<dbReference type="Gene3D" id="2.70.40.10">
    <property type="match status" value="1"/>
</dbReference>
<dbReference type="HAMAP" id="MF_00146">
    <property type="entry name" value="dCTP_deaminase"/>
    <property type="match status" value="1"/>
</dbReference>
<dbReference type="InterPro" id="IPR011962">
    <property type="entry name" value="dCTP_deaminase"/>
</dbReference>
<dbReference type="InterPro" id="IPR036157">
    <property type="entry name" value="dUTPase-like_sf"/>
</dbReference>
<dbReference type="InterPro" id="IPR033704">
    <property type="entry name" value="dUTPase_trimeric"/>
</dbReference>
<dbReference type="NCBIfam" id="TIGR02274">
    <property type="entry name" value="dCTP_deam"/>
    <property type="match status" value="1"/>
</dbReference>
<dbReference type="PANTHER" id="PTHR42680">
    <property type="entry name" value="DCTP DEAMINASE"/>
    <property type="match status" value="1"/>
</dbReference>
<dbReference type="PANTHER" id="PTHR42680:SF3">
    <property type="entry name" value="DCTP DEAMINASE"/>
    <property type="match status" value="1"/>
</dbReference>
<dbReference type="Pfam" id="PF22769">
    <property type="entry name" value="DCD"/>
    <property type="match status" value="1"/>
</dbReference>
<dbReference type="SUPFAM" id="SSF51283">
    <property type="entry name" value="dUTPase-like"/>
    <property type="match status" value="1"/>
</dbReference>
<protein>
    <recommendedName>
        <fullName evidence="1">dCTP deaminase</fullName>
        <ecNumber evidence="1">3.5.4.13</ecNumber>
    </recommendedName>
    <alternativeName>
        <fullName evidence="1">Deoxycytidine triphosphate deaminase</fullName>
    </alternativeName>
</protein>
<organism>
    <name type="scientific">Acinetobacter baumannii (strain SDF)</name>
    <dbReference type="NCBI Taxonomy" id="509170"/>
    <lineage>
        <taxon>Bacteria</taxon>
        <taxon>Pseudomonadati</taxon>
        <taxon>Pseudomonadota</taxon>
        <taxon>Gammaproteobacteria</taxon>
        <taxon>Moraxellales</taxon>
        <taxon>Moraxellaceae</taxon>
        <taxon>Acinetobacter</taxon>
        <taxon>Acinetobacter calcoaceticus/baumannii complex</taxon>
    </lineage>
</organism>
<sequence>MAIKSDRWIREMSEKHGMIEPYAENQVRFDKNGEKLISYGVSSYGYDVRCAREFKVFTNVHSAIVDPKNFDEKSFIDIESDVCIIPPNSFALARTIEYFRIPRNVLTVCLGKSTYARCGIIVNVTPLEPEWEGHVTLEFSNTTNLPARIYAGEGVAQMLFFESDEVCETSYKDRGGKYQGQTGVTLPKT</sequence>
<proteinExistence type="inferred from homology"/>
<evidence type="ECO:0000255" key="1">
    <source>
        <dbReference type="HAMAP-Rule" id="MF_00146"/>
    </source>
</evidence>